<organism>
    <name type="scientific">Mus musculus</name>
    <name type="common">Mouse</name>
    <dbReference type="NCBI Taxonomy" id="10090"/>
    <lineage>
        <taxon>Eukaryota</taxon>
        <taxon>Metazoa</taxon>
        <taxon>Chordata</taxon>
        <taxon>Craniata</taxon>
        <taxon>Vertebrata</taxon>
        <taxon>Euteleostomi</taxon>
        <taxon>Mammalia</taxon>
        <taxon>Eutheria</taxon>
        <taxon>Euarchontoglires</taxon>
        <taxon>Glires</taxon>
        <taxon>Rodentia</taxon>
        <taxon>Myomorpha</taxon>
        <taxon>Muroidea</taxon>
        <taxon>Muridae</taxon>
        <taxon>Murinae</taxon>
        <taxon>Mus</taxon>
        <taxon>Mus</taxon>
    </lineage>
</organism>
<proteinExistence type="evidence at transcript level"/>
<feature type="chain" id="PRO_0000281894" description="Testis-specific serine/threonine-protein kinase 5">
    <location>
        <begin position="1"/>
        <end position="372"/>
    </location>
</feature>
<feature type="domain" description="Protein kinase" evidence="4">
    <location>
        <begin position="27"/>
        <end position="302"/>
    </location>
</feature>
<feature type="region of interest" description="Disordered" evidence="6">
    <location>
        <begin position="314"/>
        <end position="372"/>
    </location>
</feature>
<feature type="compositionally biased region" description="Low complexity" evidence="6">
    <location>
        <begin position="343"/>
        <end position="358"/>
    </location>
</feature>
<feature type="active site" description="Proton acceptor" evidence="1 4 5">
    <location>
        <position position="173"/>
    </location>
</feature>
<feature type="binding site" evidence="1 4">
    <location>
        <begin position="33"/>
        <end position="41"/>
    </location>
    <ligand>
        <name>ATP</name>
        <dbReference type="ChEBI" id="CHEBI:30616"/>
    </ligand>
</feature>
<feature type="binding site" evidence="1 4">
    <location>
        <position position="72"/>
    </location>
    <ligand>
        <name>ATP</name>
        <dbReference type="ChEBI" id="CHEBI:30616"/>
    </ligand>
</feature>
<evidence type="ECO:0000250" key="1">
    <source>
        <dbReference type="UniProtKB" id="P28523"/>
    </source>
</evidence>
<evidence type="ECO:0000250" key="2">
    <source>
        <dbReference type="UniProtKB" id="Q61241"/>
    </source>
</evidence>
<evidence type="ECO:0000250" key="3">
    <source>
        <dbReference type="UniProtKB" id="Q9BXA7"/>
    </source>
</evidence>
<evidence type="ECO:0000255" key="4">
    <source>
        <dbReference type="PROSITE-ProRule" id="PRU00159"/>
    </source>
</evidence>
<evidence type="ECO:0000255" key="5">
    <source>
        <dbReference type="PROSITE-ProRule" id="PRU10027"/>
    </source>
</evidence>
<evidence type="ECO:0000256" key="6">
    <source>
        <dbReference type="SAM" id="MobiDB-lite"/>
    </source>
</evidence>
<evidence type="ECO:0000305" key="7"/>
<evidence type="ECO:0000312" key="8">
    <source>
        <dbReference type="EMBL" id="AAI14544.1"/>
    </source>
</evidence>
<evidence type="ECO:0000312" key="9">
    <source>
        <dbReference type="EMBL" id="BAC25160.1"/>
    </source>
</evidence>
<evidence type="ECO:0000312" key="10">
    <source>
        <dbReference type="MGI" id="MGI:1920792"/>
    </source>
</evidence>
<gene>
    <name evidence="10" type="primary">Tssk5</name>
</gene>
<comment type="function">
    <text evidence="2">May be involved in a signaling pathway during male germ cell development or mature sperm function.</text>
</comment>
<comment type="catalytic activity">
    <reaction evidence="3">
        <text>L-seryl-[protein] + ATP = O-phospho-L-seryl-[protein] + ADP + H(+)</text>
        <dbReference type="Rhea" id="RHEA:17989"/>
        <dbReference type="Rhea" id="RHEA-COMP:9863"/>
        <dbReference type="Rhea" id="RHEA-COMP:11604"/>
        <dbReference type="ChEBI" id="CHEBI:15378"/>
        <dbReference type="ChEBI" id="CHEBI:29999"/>
        <dbReference type="ChEBI" id="CHEBI:30616"/>
        <dbReference type="ChEBI" id="CHEBI:83421"/>
        <dbReference type="ChEBI" id="CHEBI:456216"/>
        <dbReference type="EC" id="2.7.11.1"/>
    </reaction>
</comment>
<comment type="catalytic activity">
    <reaction evidence="3">
        <text>L-threonyl-[protein] + ATP = O-phospho-L-threonyl-[protein] + ADP + H(+)</text>
        <dbReference type="Rhea" id="RHEA:46608"/>
        <dbReference type="Rhea" id="RHEA-COMP:11060"/>
        <dbReference type="Rhea" id="RHEA-COMP:11605"/>
        <dbReference type="ChEBI" id="CHEBI:15378"/>
        <dbReference type="ChEBI" id="CHEBI:30013"/>
        <dbReference type="ChEBI" id="CHEBI:30616"/>
        <dbReference type="ChEBI" id="CHEBI:61977"/>
        <dbReference type="ChEBI" id="CHEBI:456216"/>
        <dbReference type="EC" id="2.7.11.1"/>
    </reaction>
</comment>
<comment type="cofactor">
    <cofactor evidence="3">
        <name>Mg(2+)</name>
        <dbReference type="ChEBI" id="CHEBI:18420"/>
    </cofactor>
</comment>
<comment type="activity regulation">
    <text evidence="3">Activated by phosphorylation on Thr-207, potentially by autophosphorylation.</text>
</comment>
<comment type="PTM">
    <text evidence="3">Autophosphorylated.</text>
</comment>
<comment type="similarity">
    <text evidence="7">Belongs to the protein kinase superfamily. CAMK Ser/Thr protein kinase family.</text>
</comment>
<comment type="sequence caution" evidence="7">
    <conflict type="frameshift">
        <sequence resource="EMBL-CDS" id="BAC25160"/>
    </conflict>
</comment>
<dbReference type="EC" id="2.7.11.1"/>
<dbReference type="EMBL" id="AK007032">
    <property type="protein sequence ID" value="BAC25160.1"/>
    <property type="status" value="ALT_FRAME"/>
    <property type="molecule type" value="mRNA"/>
</dbReference>
<dbReference type="EMBL" id="BC114543">
    <property type="protein sequence ID" value="AAI14544.1"/>
    <property type="molecule type" value="mRNA"/>
</dbReference>
<dbReference type="CCDS" id="CCDS37122.1"/>
<dbReference type="RefSeq" id="NP_898922.2">
    <property type="nucleotide sequence ID" value="NM_183099.2"/>
</dbReference>
<dbReference type="SMR" id="Q8C1R0"/>
<dbReference type="BioGRID" id="216092">
    <property type="interactions" value="2"/>
</dbReference>
<dbReference type="FunCoup" id="Q8C1R0">
    <property type="interactions" value="71"/>
</dbReference>
<dbReference type="MINT" id="Q8C1R0"/>
<dbReference type="STRING" id="10090.ENSMUSP00000071120"/>
<dbReference type="SwissPalm" id="Q8C1R0"/>
<dbReference type="jPOST" id="Q8C1R0"/>
<dbReference type="PaxDb" id="10090-ENSMUSP00000071120"/>
<dbReference type="ProteomicsDB" id="300143"/>
<dbReference type="DNASU" id="73542"/>
<dbReference type="Ensembl" id="ENSMUST00000071119.8">
    <property type="protein sequence ID" value="ENSMUSP00000071120.7"/>
    <property type="gene ID" value="ENSMUSG00000060794.9"/>
</dbReference>
<dbReference type="GeneID" id="73542"/>
<dbReference type="KEGG" id="mmu:73542"/>
<dbReference type="UCSC" id="uc007wka.1">
    <property type="organism name" value="mouse"/>
</dbReference>
<dbReference type="AGR" id="MGI:1920792"/>
<dbReference type="CTD" id="73542"/>
<dbReference type="MGI" id="MGI:1920792">
    <property type="gene designation" value="Tssk5"/>
</dbReference>
<dbReference type="VEuPathDB" id="HostDB:ENSMUSG00000060794"/>
<dbReference type="eggNOG" id="KOG0583">
    <property type="taxonomic scope" value="Eukaryota"/>
</dbReference>
<dbReference type="GeneTree" id="ENSGT00940000163790"/>
<dbReference type="HOGENOM" id="CLU_000288_63_0_1"/>
<dbReference type="InParanoid" id="Q8C1R0"/>
<dbReference type="OMA" id="MDQVREC"/>
<dbReference type="OrthoDB" id="193931at2759"/>
<dbReference type="PhylomeDB" id="Q8C1R0"/>
<dbReference type="TreeFam" id="TF105333"/>
<dbReference type="BioGRID-ORCS" id="73542">
    <property type="hits" value="1 hit in 77 CRISPR screens"/>
</dbReference>
<dbReference type="PRO" id="PR:Q8C1R0"/>
<dbReference type="Proteomes" id="UP000000589">
    <property type="component" value="Chromosome 15"/>
</dbReference>
<dbReference type="RNAct" id="Q8C1R0">
    <property type="molecule type" value="protein"/>
</dbReference>
<dbReference type="Bgee" id="ENSMUSG00000060794">
    <property type="expression patterns" value="Expressed in spermatid and 3 other cell types or tissues"/>
</dbReference>
<dbReference type="GO" id="GO:0005524">
    <property type="term" value="F:ATP binding"/>
    <property type="evidence" value="ECO:0000250"/>
    <property type="project" value="UniProtKB"/>
</dbReference>
<dbReference type="GO" id="GO:0000287">
    <property type="term" value="F:magnesium ion binding"/>
    <property type="evidence" value="ECO:0000250"/>
    <property type="project" value="UniProtKB"/>
</dbReference>
<dbReference type="GO" id="GO:0106310">
    <property type="term" value="F:protein serine kinase activity"/>
    <property type="evidence" value="ECO:0007669"/>
    <property type="project" value="RHEA"/>
</dbReference>
<dbReference type="GO" id="GO:0004674">
    <property type="term" value="F:protein serine/threonine kinase activity"/>
    <property type="evidence" value="ECO:0000250"/>
    <property type="project" value="UniProtKB"/>
</dbReference>
<dbReference type="GO" id="GO:0030154">
    <property type="term" value="P:cell differentiation"/>
    <property type="evidence" value="ECO:0007669"/>
    <property type="project" value="UniProtKB-KW"/>
</dbReference>
<dbReference type="GO" id="GO:0006468">
    <property type="term" value="P:protein phosphorylation"/>
    <property type="evidence" value="ECO:0000250"/>
    <property type="project" value="UniProtKB"/>
</dbReference>
<dbReference type="GO" id="GO:0007283">
    <property type="term" value="P:spermatogenesis"/>
    <property type="evidence" value="ECO:0007669"/>
    <property type="project" value="UniProtKB-KW"/>
</dbReference>
<dbReference type="FunFam" id="1.10.510.10:FF:000944">
    <property type="entry name" value="Testis-specific serine/threonine-protein kinase 5"/>
    <property type="match status" value="1"/>
</dbReference>
<dbReference type="Gene3D" id="1.10.510.10">
    <property type="entry name" value="Transferase(Phosphotransferase) domain 1"/>
    <property type="match status" value="1"/>
</dbReference>
<dbReference type="InterPro" id="IPR011009">
    <property type="entry name" value="Kinase-like_dom_sf"/>
</dbReference>
<dbReference type="InterPro" id="IPR000719">
    <property type="entry name" value="Prot_kinase_dom"/>
</dbReference>
<dbReference type="InterPro" id="IPR008271">
    <property type="entry name" value="Ser/Thr_kinase_AS"/>
</dbReference>
<dbReference type="PANTHER" id="PTHR24346">
    <property type="entry name" value="MAP/MICROTUBULE AFFINITY-REGULATING KINASE"/>
    <property type="match status" value="1"/>
</dbReference>
<dbReference type="PANTHER" id="PTHR24346:SF84">
    <property type="entry name" value="TESTIS SPECIFIC SERINE KINASE 5"/>
    <property type="match status" value="1"/>
</dbReference>
<dbReference type="Pfam" id="PF00069">
    <property type="entry name" value="Pkinase"/>
    <property type="match status" value="1"/>
</dbReference>
<dbReference type="SMART" id="SM00220">
    <property type="entry name" value="S_TKc"/>
    <property type="match status" value="1"/>
</dbReference>
<dbReference type="SUPFAM" id="SSF56112">
    <property type="entry name" value="Protein kinase-like (PK-like)"/>
    <property type="match status" value="1"/>
</dbReference>
<dbReference type="PROSITE" id="PS50011">
    <property type="entry name" value="PROTEIN_KINASE_DOM"/>
    <property type="match status" value="1"/>
</dbReference>
<dbReference type="PROSITE" id="PS00108">
    <property type="entry name" value="PROTEIN_KINASE_ST"/>
    <property type="match status" value="1"/>
</dbReference>
<accession>Q8C1R0</accession>
<accession>Q1WWK7</accession>
<sequence>MRSSSWRKSDQRVFIEQVRECMNNGYLLSSKKIGSGAFSKVYLAYATRERMKHNPRLSSDLRGKRHTMVAIKIVSMAEAPAEYSRKFLPREILSLNATYKHMNIVQLYETYQNSQRSYLVLELAARGDLLEHINAVSDLRCCPGLEEEEARRLFWQLVSAVAHCHNVGIVHRDLKCENILLDDQGFIKLTDFGFANWVGLKNSLLSTFCGSVAYTAPEILMSKKYNGEQADLWSLGIILHAMVSGKLPFKEHQPHRMLNLIRRGPIFRPGLSPECRDLIRGLLQLHPCERLDLQQVAAHCWMLPAEHMLSSALGAPREQDHSWSTVAPDNTEPDRDTRHARSKGSSSSSGRTSPRRPSLAQLCNTWKPAPEQ</sequence>
<keyword id="KW-0067">ATP-binding</keyword>
<keyword id="KW-0217">Developmental protein</keyword>
<keyword id="KW-0221">Differentiation</keyword>
<keyword id="KW-0418">Kinase</keyword>
<keyword id="KW-0460">Magnesium</keyword>
<keyword id="KW-0479">Metal-binding</keyword>
<keyword id="KW-0547">Nucleotide-binding</keyword>
<keyword id="KW-0597">Phosphoprotein</keyword>
<keyword id="KW-1185">Reference proteome</keyword>
<keyword id="KW-0723">Serine/threonine-protein kinase</keyword>
<keyword id="KW-0744">Spermatogenesis</keyword>
<keyword id="KW-0808">Transferase</keyword>
<reference evidence="9" key="1">
    <citation type="journal article" date="2005" name="Science">
        <title>The transcriptional landscape of the mammalian genome.</title>
        <authorList>
            <person name="Carninci P."/>
            <person name="Kasukawa T."/>
            <person name="Katayama S."/>
            <person name="Gough J."/>
            <person name="Frith M.C."/>
            <person name="Maeda N."/>
            <person name="Oyama R."/>
            <person name="Ravasi T."/>
            <person name="Lenhard B."/>
            <person name="Wells C."/>
            <person name="Kodzius R."/>
            <person name="Shimokawa K."/>
            <person name="Bajic V.B."/>
            <person name="Brenner S.E."/>
            <person name="Batalov S."/>
            <person name="Forrest A.R."/>
            <person name="Zavolan M."/>
            <person name="Davis M.J."/>
            <person name="Wilming L.G."/>
            <person name="Aidinis V."/>
            <person name="Allen J.E."/>
            <person name="Ambesi-Impiombato A."/>
            <person name="Apweiler R."/>
            <person name="Aturaliya R.N."/>
            <person name="Bailey T.L."/>
            <person name="Bansal M."/>
            <person name="Baxter L."/>
            <person name="Beisel K.W."/>
            <person name="Bersano T."/>
            <person name="Bono H."/>
            <person name="Chalk A.M."/>
            <person name="Chiu K.P."/>
            <person name="Choudhary V."/>
            <person name="Christoffels A."/>
            <person name="Clutterbuck D.R."/>
            <person name="Crowe M.L."/>
            <person name="Dalla E."/>
            <person name="Dalrymple B.P."/>
            <person name="de Bono B."/>
            <person name="Della Gatta G."/>
            <person name="di Bernardo D."/>
            <person name="Down T."/>
            <person name="Engstrom P."/>
            <person name="Fagiolini M."/>
            <person name="Faulkner G."/>
            <person name="Fletcher C.F."/>
            <person name="Fukushima T."/>
            <person name="Furuno M."/>
            <person name="Futaki S."/>
            <person name="Gariboldi M."/>
            <person name="Georgii-Hemming P."/>
            <person name="Gingeras T.R."/>
            <person name="Gojobori T."/>
            <person name="Green R.E."/>
            <person name="Gustincich S."/>
            <person name="Harbers M."/>
            <person name="Hayashi Y."/>
            <person name="Hensch T.K."/>
            <person name="Hirokawa N."/>
            <person name="Hill D."/>
            <person name="Huminiecki L."/>
            <person name="Iacono M."/>
            <person name="Ikeo K."/>
            <person name="Iwama A."/>
            <person name="Ishikawa T."/>
            <person name="Jakt M."/>
            <person name="Kanapin A."/>
            <person name="Katoh M."/>
            <person name="Kawasawa Y."/>
            <person name="Kelso J."/>
            <person name="Kitamura H."/>
            <person name="Kitano H."/>
            <person name="Kollias G."/>
            <person name="Krishnan S.P."/>
            <person name="Kruger A."/>
            <person name="Kummerfeld S.K."/>
            <person name="Kurochkin I.V."/>
            <person name="Lareau L.F."/>
            <person name="Lazarevic D."/>
            <person name="Lipovich L."/>
            <person name="Liu J."/>
            <person name="Liuni S."/>
            <person name="McWilliam S."/>
            <person name="Madan Babu M."/>
            <person name="Madera M."/>
            <person name="Marchionni L."/>
            <person name="Matsuda H."/>
            <person name="Matsuzawa S."/>
            <person name="Miki H."/>
            <person name="Mignone F."/>
            <person name="Miyake S."/>
            <person name="Morris K."/>
            <person name="Mottagui-Tabar S."/>
            <person name="Mulder N."/>
            <person name="Nakano N."/>
            <person name="Nakauchi H."/>
            <person name="Ng P."/>
            <person name="Nilsson R."/>
            <person name="Nishiguchi S."/>
            <person name="Nishikawa S."/>
            <person name="Nori F."/>
            <person name="Ohara O."/>
            <person name="Okazaki Y."/>
            <person name="Orlando V."/>
            <person name="Pang K.C."/>
            <person name="Pavan W.J."/>
            <person name="Pavesi G."/>
            <person name="Pesole G."/>
            <person name="Petrovsky N."/>
            <person name="Piazza S."/>
            <person name="Reed J."/>
            <person name="Reid J.F."/>
            <person name="Ring B.Z."/>
            <person name="Ringwald M."/>
            <person name="Rost B."/>
            <person name="Ruan Y."/>
            <person name="Salzberg S.L."/>
            <person name="Sandelin A."/>
            <person name="Schneider C."/>
            <person name="Schoenbach C."/>
            <person name="Sekiguchi K."/>
            <person name="Semple C.A."/>
            <person name="Seno S."/>
            <person name="Sessa L."/>
            <person name="Sheng Y."/>
            <person name="Shibata Y."/>
            <person name="Shimada H."/>
            <person name="Shimada K."/>
            <person name="Silva D."/>
            <person name="Sinclair B."/>
            <person name="Sperling S."/>
            <person name="Stupka E."/>
            <person name="Sugiura K."/>
            <person name="Sultana R."/>
            <person name="Takenaka Y."/>
            <person name="Taki K."/>
            <person name="Tammoja K."/>
            <person name="Tan S.L."/>
            <person name="Tang S."/>
            <person name="Taylor M.S."/>
            <person name="Tegner J."/>
            <person name="Teichmann S.A."/>
            <person name="Ueda H.R."/>
            <person name="van Nimwegen E."/>
            <person name="Verardo R."/>
            <person name="Wei C.L."/>
            <person name="Yagi K."/>
            <person name="Yamanishi H."/>
            <person name="Zabarovsky E."/>
            <person name="Zhu S."/>
            <person name="Zimmer A."/>
            <person name="Hide W."/>
            <person name="Bult C."/>
            <person name="Grimmond S.M."/>
            <person name="Teasdale R.D."/>
            <person name="Liu E.T."/>
            <person name="Brusic V."/>
            <person name="Quackenbush J."/>
            <person name="Wahlestedt C."/>
            <person name="Mattick J.S."/>
            <person name="Hume D.A."/>
            <person name="Kai C."/>
            <person name="Sasaki D."/>
            <person name="Tomaru Y."/>
            <person name="Fukuda S."/>
            <person name="Kanamori-Katayama M."/>
            <person name="Suzuki M."/>
            <person name="Aoki J."/>
            <person name="Arakawa T."/>
            <person name="Iida J."/>
            <person name="Imamura K."/>
            <person name="Itoh M."/>
            <person name="Kato T."/>
            <person name="Kawaji H."/>
            <person name="Kawagashira N."/>
            <person name="Kawashima T."/>
            <person name="Kojima M."/>
            <person name="Kondo S."/>
            <person name="Konno H."/>
            <person name="Nakano K."/>
            <person name="Ninomiya N."/>
            <person name="Nishio T."/>
            <person name="Okada M."/>
            <person name="Plessy C."/>
            <person name="Shibata K."/>
            <person name="Shiraki T."/>
            <person name="Suzuki S."/>
            <person name="Tagami M."/>
            <person name="Waki K."/>
            <person name="Watahiki A."/>
            <person name="Okamura-Oho Y."/>
            <person name="Suzuki H."/>
            <person name="Kawai J."/>
            <person name="Hayashizaki Y."/>
        </authorList>
    </citation>
    <scope>NUCLEOTIDE SEQUENCE [LARGE SCALE MRNA]</scope>
    <source>
        <strain evidence="9">C57BL/6J</strain>
        <tissue evidence="9">Testis</tissue>
    </source>
</reference>
<reference evidence="7 8" key="2">
    <citation type="journal article" date="2004" name="Genome Res.">
        <title>The status, quality, and expansion of the NIH full-length cDNA project: the Mammalian Gene Collection (MGC).</title>
        <authorList>
            <consortium name="The MGC Project Team"/>
        </authorList>
    </citation>
    <scope>NUCLEOTIDE SEQUENCE [LARGE SCALE MRNA] OF 1-255</scope>
</reference>
<name>TSSK5_MOUSE</name>
<protein>
    <recommendedName>
        <fullName>Testis-specific serine/threonine-protein kinase 5</fullName>
        <shortName>TSK-5</shortName>
        <shortName>TSSK-5</shortName>
        <shortName>Testis-specific kinase 5</shortName>
        <ecNumber>2.7.11.1</ecNumber>
    </recommendedName>
</protein>